<gene>
    <name evidence="1" type="primary">grpE</name>
</gene>
<reference key="1">
    <citation type="submission" date="1999-06" db="EMBL/GenBank/DDBJ databases">
        <title>Cloning and analysis of dnaK and dnaJ genes of phytoplasma associated with peanut witches' broom.</title>
        <authorList>
            <person name="Chu P.W."/>
            <person name="Lin C.P."/>
        </authorList>
    </citation>
    <scope>NUCLEOTIDE SEQUENCE [GENOMIC DNA]</scope>
</reference>
<feature type="chain" id="PRO_0000113832" description="Protein GrpE">
    <location>
        <begin position="1"/>
        <end position="264"/>
    </location>
</feature>
<feature type="region of interest" description="Disordered" evidence="2">
    <location>
        <begin position="36"/>
        <end position="59"/>
    </location>
</feature>
<feature type="compositionally biased region" description="Basic and acidic residues" evidence="2">
    <location>
        <begin position="36"/>
        <end position="49"/>
    </location>
</feature>
<feature type="compositionally biased region" description="Low complexity" evidence="2">
    <location>
        <begin position="50"/>
        <end position="59"/>
    </location>
</feature>
<keyword id="KW-0143">Chaperone</keyword>
<keyword id="KW-0963">Cytoplasm</keyword>
<keyword id="KW-0346">Stress response</keyword>
<proteinExistence type="inferred from homology"/>
<name>GRPE_PEWBP</name>
<dbReference type="EMBL" id="AF160726">
    <property type="protein sequence ID" value="AAF89528.1"/>
    <property type="molecule type" value="Genomic_DNA"/>
</dbReference>
<dbReference type="SMR" id="Q9KJU0"/>
<dbReference type="GO" id="GO:0005737">
    <property type="term" value="C:cytoplasm"/>
    <property type="evidence" value="ECO:0007669"/>
    <property type="project" value="UniProtKB-SubCell"/>
</dbReference>
<dbReference type="GO" id="GO:0000774">
    <property type="term" value="F:adenyl-nucleotide exchange factor activity"/>
    <property type="evidence" value="ECO:0007669"/>
    <property type="project" value="InterPro"/>
</dbReference>
<dbReference type="GO" id="GO:0042803">
    <property type="term" value="F:protein homodimerization activity"/>
    <property type="evidence" value="ECO:0007669"/>
    <property type="project" value="InterPro"/>
</dbReference>
<dbReference type="GO" id="GO:0051087">
    <property type="term" value="F:protein-folding chaperone binding"/>
    <property type="evidence" value="ECO:0007669"/>
    <property type="project" value="InterPro"/>
</dbReference>
<dbReference type="GO" id="GO:0051082">
    <property type="term" value="F:unfolded protein binding"/>
    <property type="evidence" value="ECO:0007669"/>
    <property type="project" value="TreeGrafter"/>
</dbReference>
<dbReference type="GO" id="GO:0006457">
    <property type="term" value="P:protein folding"/>
    <property type="evidence" value="ECO:0007669"/>
    <property type="project" value="InterPro"/>
</dbReference>
<dbReference type="CDD" id="cd00446">
    <property type="entry name" value="GrpE"/>
    <property type="match status" value="1"/>
</dbReference>
<dbReference type="Gene3D" id="3.90.20.20">
    <property type="match status" value="1"/>
</dbReference>
<dbReference type="Gene3D" id="2.30.22.10">
    <property type="entry name" value="Head domain of nucleotide exchange factor GrpE"/>
    <property type="match status" value="1"/>
</dbReference>
<dbReference type="HAMAP" id="MF_01151">
    <property type="entry name" value="GrpE"/>
    <property type="match status" value="1"/>
</dbReference>
<dbReference type="InterPro" id="IPR000740">
    <property type="entry name" value="GrpE"/>
</dbReference>
<dbReference type="InterPro" id="IPR013805">
    <property type="entry name" value="GrpE_coiled_coil"/>
</dbReference>
<dbReference type="InterPro" id="IPR009012">
    <property type="entry name" value="GrpE_head"/>
</dbReference>
<dbReference type="PANTHER" id="PTHR21237">
    <property type="entry name" value="GRPE PROTEIN"/>
    <property type="match status" value="1"/>
</dbReference>
<dbReference type="PANTHER" id="PTHR21237:SF23">
    <property type="entry name" value="GRPE PROTEIN HOMOLOG, MITOCHONDRIAL"/>
    <property type="match status" value="1"/>
</dbReference>
<dbReference type="Pfam" id="PF01025">
    <property type="entry name" value="GrpE"/>
    <property type="match status" value="1"/>
</dbReference>
<dbReference type="PRINTS" id="PR00773">
    <property type="entry name" value="GRPEPROTEIN"/>
</dbReference>
<dbReference type="SUPFAM" id="SSF58014">
    <property type="entry name" value="Coiled-coil domain of nucleotide exchange factor GrpE"/>
    <property type="match status" value="1"/>
</dbReference>
<dbReference type="SUPFAM" id="SSF51064">
    <property type="entry name" value="Head domain of nucleotide exchange factor GrpE"/>
    <property type="match status" value="1"/>
</dbReference>
<dbReference type="PROSITE" id="PS01071">
    <property type="entry name" value="GRPE"/>
    <property type="match status" value="1"/>
</dbReference>
<sequence length="264" mass="30542">MQEFMNFEECSKQNTNNCKQHEKNIDENNCSCKEKKVQSKKVSSDHSSSEDNASSDINSNKAETLTLNCGDQSDNKNSISDIESNKFIPNENDFQMLKKQLNDLKAENVNLKRDLQEAHQQRTNDNLKYLADFDNFKKRITVQTNREIKYALTDFIKNILIPLEQFEKVLEMPKVDDSVKSFLLGFKMIHKQVKDILQKEGVEEIKALGVKFDPNFHYALEKISDLKQPNGINVLVLQKGFLYKDLVIKPAMVKVNEWSDKNND</sequence>
<accession>Q9KJU0</accession>
<evidence type="ECO:0000255" key="1">
    <source>
        <dbReference type="HAMAP-Rule" id="MF_01151"/>
    </source>
</evidence>
<evidence type="ECO:0000256" key="2">
    <source>
        <dbReference type="SAM" id="MobiDB-lite"/>
    </source>
</evidence>
<comment type="function">
    <text evidence="1">Participates actively in the response to hyperosmotic and heat shock by preventing the aggregation of stress-denatured proteins, in association with DnaK and GrpE. It is the nucleotide exchange factor for DnaK and may function as a thermosensor. Unfolded proteins bind initially to DnaJ; upon interaction with the DnaJ-bound protein, DnaK hydrolyzes its bound ATP, resulting in the formation of a stable complex. GrpE releases ADP from DnaK; ATP binding to DnaK triggers the release of the substrate protein, thus completing the reaction cycle. Several rounds of ATP-dependent interactions between DnaJ, DnaK and GrpE are required for fully efficient folding.</text>
</comment>
<comment type="subunit">
    <text evidence="1">Homodimer.</text>
</comment>
<comment type="subcellular location">
    <subcellularLocation>
        <location evidence="1">Cytoplasm</location>
    </subcellularLocation>
</comment>
<comment type="similarity">
    <text evidence="1">Belongs to the GrpE family.</text>
</comment>
<protein>
    <recommendedName>
        <fullName evidence="1">Protein GrpE</fullName>
    </recommendedName>
    <alternativeName>
        <fullName evidence="1">HSP-70 cofactor</fullName>
    </alternativeName>
</protein>
<organism>
    <name type="scientific">Peanut witches'-broom phytoplasma</name>
    <dbReference type="NCBI Taxonomy" id="35772"/>
    <lineage>
        <taxon>Bacteria</taxon>
        <taxon>Bacillati</taxon>
        <taxon>Mycoplasmatota</taxon>
        <taxon>Mollicutes</taxon>
        <taxon>Acholeplasmatales</taxon>
        <taxon>Acholeplasmataceae</taxon>
        <taxon>Candidatus Phytoplasma</taxon>
        <taxon>16SrII (Peanut WB group)</taxon>
    </lineage>
</organism>